<protein>
    <recommendedName>
        <fullName evidence="1">Probable cytosol aminopeptidase</fullName>
        <ecNumber evidence="1">3.4.11.1</ecNumber>
    </recommendedName>
    <alternativeName>
        <fullName evidence="1">Leucine aminopeptidase</fullName>
        <shortName evidence="1">LAP</shortName>
        <ecNumber evidence="1">3.4.11.10</ecNumber>
    </alternativeName>
    <alternativeName>
        <fullName evidence="1">Leucyl aminopeptidase</fullName>
    </alternativeName>
</protein>
<evidence type="ECO:0000255" key="1">
    <source>
        <dbReference type="HAMAP-Rule" id="MF_00181"/>
    </source>
</evidence>
<name>AMPA_SALPA</name>
<reference key="1">
    <citation type="journal article" date="2004" name="Nat. Genet.">
        <title>Comparison of genome degradation in Paratyphi A and Typhi, human-restricted serovars of Salmonella enterica that cause typhoid.</title>
        <authorList>
            <person name="McClelland M."/>
            <person name="Sanderson K.E."/>
            <person name="Clifton S.W."/>
            <person name="Latreille P."/>
            <person name="Porwollik S."/>
            <person name="Sabo A."/>
            <person name="Meyer R."/>
            <person name="Bieri T."/>
            <person name="Ozersky P."/>
            <person name="McLellan M."/>
            <person name="Harkins C.R."/>
            <person name="Wang C."/>
            <person name="Nguyen C."/>
            <person name="Berghoff A."/>
            <person name="Elliott G."/>
            <person name="Kohlberg S."/>
            <person name="Strong C."/>
            <person name="Du F."/>
            <person name="Carter J."/>
            <person name="Kremizki C."/>
            <person name="Layman D."/>
            <person name="Leonard S."/>
            <person name="Sun H."/>
            <person name="Fulton L."/>
            <person name="Nash W."/>
            <person name="Miner T."/>
            <person name="Minx P."/>
            <person name="Delehaunty K."/>
            <person name="Fronick C."/>
            <person name="Magrini V."/>
            <person name="Nhan M."/>
            <person name="Warren W."/>
            <person name="Florea L."/>
            <person name="Spieth J."/>
            <person name="Wilson R.K."/>
        </authorList>
    </citation>
    <scope>NUCLEOTIDE SEQUENCE [LARGE SCALE GENOMIC DNA]</scope>
    <source>
        <strain>ATCC 9150 / SARB42</strain>
    </source>
</reference>
<keyword id="KW-0031">Aminopeptidase</keyword>
<keyword id="KW-0963">Cytoplasm</keyword>
<keyword id="KW-0378">Hydrolase</keyword>
<keyword id="KW-0464">Manganese</keyword>
<keyword id="KW-0479">Metal-binding</keyword>
<keyword id="KW-0645">Protease</keyword>
<accession>Q5PJD4</accession>
<dbReference type="EC" id="3.4.11.1" evidence="1"/>
<dbReference type="EC" id="3.4.11.10" evidence="1"/>
<dbReference type="EMBL" id="CP000026">
    <property type="protein sequence ID" value="AAV80012.1"/>
    <property type="molecule type" value="Genomic_DNA"/>
</dbReference>
<dbReference type="RefSeq" id="WP_000397158.1">
    <property type="nucleotide sequence ID" value="NC_006511.1"/>
</dbReference>
<dbReference type="SMR" id="Q5PJD4"/>
<dbReference type="MEROPS" id="M17.003"/>
<dbReference type="KEGG" id="spt:SPA4278"/>
<dbReference type="HOGENOM" id="CLU_013734_2_2_6"/>
<dbReference type="Proteomes" id="UP000008185">
    <property type="component" value="Chromosome"/>
</dbReference>
<dbReference type="GO" id="GO:0005737">
    <property type="term" value="C:cytoplasm"/>
    <property type="evidence" value="ECO:0007669"/>
    <property type="project" value="UniProtKB-SubCell"/>
</dbReference>
<dbReference type="GO" id="GO:0030145">
    <property type="term" value="F:manganese ion binding"/>
    <property type="evidence" value="ECO:0007669"/>
    <property type="project" value="UniProtKB-UniRule"/>
</dbReference>
<dbReference type="GO" id="GO:0070006">
    <property type="term" value="F:metalloaminopeptidase activity"/>
    <property type="evidence" value="ECO:0007669"/>
    <property type="project" value="InterPro"/>
</dbReference>
<dbReference type="GO" id="GO:0006508">
    <property type="term" value="P:proteolysis"/>
    <property type="evidence" value="ECO:0007669"/>
    <property type="project" value="UniProtKB-KW"/>
</dbReference>
<dbReference type="CDD" id="cd00433">
    <property type="entry name" value="Peptidase_M17"/>
    <property type="match status" value="1"/>
</dbReference>
<dbReference type="FunFam" id="3.40.220.10:FF:000001">
    <property type="entry name" value="Probable cytosol aminopeptidase"/>
    <property type="match status" value="1"/>
</dbReference>
<dbReference type="FunFam" id="3.40.630.10:FF:000004">
    <property type="entry name" value="Probable cytosol aminopeptidase"/>
    <property type="match status" value="1"/>
</dbReference>
<dbReference type="Gene3D" id="3.40.220.10">
    <property type="entry name" value="Leucine Aminopeptidase, subunit E, domain 1"/>
    <property type="match status" value="1"/>
</dbReference>
<dbReference type="Gene3D" id="3.40.630.10">
    <property type="entry name" value="Zn peptidases"/>
    <property type="match status" value="1"/>
</dbReference>
<dbReference type="HAMAP" id="MF_00181">
    <property type="entry name" value="Cytosol_peptidase_M17"/>
    <property type="match status" value="1"/>
</dbReference>
<dbReference type="InterPro" id="IPR011356">
    <property type="entry name" value="Leucine_aapep/pepB"/>
</dbReference>
<dbReference type="InterPro" id="IPR043472">
    <property type="entry name" value="Macro_dom-like"/>
</dbReference>
<dbReference type="InterPro" id="IPR000819">
    <property type="entry name" value="Peptidase_M17_C"/>
</dbReference>
<dbReference type="InterPro" id="IPR023042">
    <property type="entry name" value="Peptidase_M17_leu_NH2_pept"/>
</dbReference>
<dbReference type="InterPro" id="IPR008283">
    <property type="entry name" value="Peptidase_M17_N"/>
</dbReference>
<dbReference type="NCBIfam" id="NF002072">
    <property type="entry name" value="PRK00913.1-1"/>
    <property type="match status" value="1"/>
</dbReference>
<dbReference type="NCBIfam" id="NF002073">
    <property type="entry name" value="PRK00913.1-2"/>
    <property type="match status" value="1"/>
</dbReference>
<dbReference type="NCBIfam" id="NF002074">
    <property type="entry name" value="PRK00913.1-4"/>
    <property type="match status" value="1"/>
</dbReference>
<dbReference type="PANTHER" id="PTHR11963:SF23">
    <property type="entry name" value="CYTOSOL AMINOPEPTIDASE"/>
    <property type="match status" value="1"/>
</dbReference>
<dbReference type="PANTHER" id="PTHR11963">
    <property type="entry name" value="LEUCINE AMINOPEPTIDASE-RELATED"/>
    <property type="match status" value="1"/>
</dbReference>
<dbReference type="Pfam" id="PF00883">
    <property type="entry name" value="Peptidase_M17"/>
    <property type="match status" value="1"/>
</dbReference>
<dbReference type="Pfam" id="PF02789">
    <property type="entry name" value="Peptidase_M17_N"/>
    <property type="match status" value="1"/>
</dbReference>
<dbReference type="PRINTS" id="PR00481">
    <property type="entry name" value="LAMNOPPTDASE"/>
</dbReference>
<dbReference type="SUPFAM" id="SSF52949">
    <property type="entry name" value="Macro domain-like"/>
    <property type="match status" value="1"/>
</dbReference>
<dbReference type="SUPFAM" id="SSF53187">
    <property type="entry name" value="Zn-dependent exopeptidases"/>
    <property type="match status" value="1"/>
</dbReference>
<dbReference type="PROSITE" id="PS00631">
    <property type="entry name" value="CYTOSOL_AP"/>
    <property type="match status" value="1"/>
</dbReference>
<feature type="chain" id="PRO_1000019976" description="Probable cytosol aminopeptidase">
    <location>
        <begin position="1"/>
        <end position="503"/>
    </location>
</feature>
<feature type="active site" evidence="1">
    <location>
        <position position="282"/>
    </location>
</feature>
<feature type="active site" evidence="1">
    <location>
        <position position="356"/>
    </location>
</feature>
<feature type="binding site" evidence="1">
    <location>
        <position position="270"/>
    </location>
    <ligand>
        <name>Mn(2+)</name>
        <dbReference type="ChEBI" id="CHEBI:29035"/>
        <label>2</label>
    </ligand>
</feature>
<feature type="binding site" evidence="1">
    <location>
        <position position="275"/>
    </location>
    <ligand>
        <name>Mn(2+)</name>
        <dbReference type="ChEBI" id="CHEBI:29035"/>
        <label>1</label>
    </ligand>
</feature>
<feature type="binding site" evidence="1">
    <location>
        <position position="275"/>
    </location>
    <ligand>
        <name>Mn(2+)</name>
        <dbReference type="ChEBI" id="CHEBI:29035"/>
        <label>2</label>
    </ligand>
</feature>
<feature type="binding site" evidence="1">
    <location>
        <position position="293"/>
    </location>
    <ligand>
        <name>Mn(2+)</name>
        <dbReference type="ChEBI" id="CHEBI:29035"/>
        <label>2</label>
    </ligand>
</feature>
<feature type="binding site" evidence="1">
    <location>
        <position position="352"/>
    </location>
    <ligand>
        <name>Mn(2+)</name>
        <dbReference type="ChEBI" id="CHEBI:29035"/>
        <label>1</label>
    </ligand>
</feature>
<feature type="binding site" evidence="1">
    <location>
        <position position="354"/>
    </location>
    <ligand>
        <name>Mn(2+)</name>
        <dbReference type="ChEBI" id="CHEBI:29035"/>
        <label>1</label>
    </ligand>
</feature>
<feature type="binding site" evidence="1">
    <location>
        <position position="354"/>
    </location>
    <ligand>
        <name>Mn(2+)</name>
        <dbReference type="ChEBI" id="CHEBI:29035"/>
        <label>2</label>
    </ligand>
</feature>
<proteinExistence type="inferred from homology"/>
<comment type="function">
    <text evidence="1">Presumably involved in the processing and regular turnover of intracellular proteins. Catalyzes the removal of unsubstituted N-terminal amino acids from various peptides.</text>
</comment>
<comment type="catalytic activity">
    <reaction evidence="1">
        <text>Release of an N-terminal amino acid, Xaa-|-Yaa-, in which Xaa is preferably Leu, but may be other amino acids including Pro although not Arg or Lys, and Yaa may be Pro. Amino acid amides and methyl esters are also readily hydrolyzed, but rates on arylamides are exceedingly low.</text>
        <dbReference type="EC" id="3.4.11.1"/>
    </reaction>
</comment>
<comment type="catalytic activity">
    <reaction evidence="1">
        <text>Release of an N-terminal amino acid, preferentially leucine, but not glutamic or aspartic acids.</text>
        <dbReference type="EC" id="3.4.11.10"/>
    </reaction>
</comment>
<comment type="cofactor">
    <cofactor evidence="1">
        <name>Mn(2+)</name>
        <dbReference type="ChEBI" id="CHEBI:29035"/>
    </cofactor>
    <text evidence="1">Binds 2 manganese ions per subunit.</text>
</comment>
<comment type="subcellular location">
    <subcellularLocation>
        <location evidence="1">Cytoplasm</location>
    </subcellularLocation>
</comment>
<comment type="similarity">
    <text evidence="1">Belongs to the peptidase M17 family.</text>
</comment>
<sequence>MEFSVKSGSPEKQRSACIVVGVFEPRRLSPIAEQLDKISDGYISALLRRGELEGKPGQTLLLHHVPNVLSERILLIGCGKERELDERQYKQVIQKTINTLNDTGSMEAVCFLTELHVKGRNNYWKVRQAVETAKETLYSFDQLKTNKSEPRRPLRKMVFNVPTRRELTSGERAIQHGLAIAAGIKAAKDLGNMPPNICNAAYLASQARQLADSYSKNVITRVIGEQQMRELGMNAYLAVGHGSQNESLMSVIEYKGNPSEDARPIVLVGKGLTFDSGGISIKPSEGMDEMKYDMCGAAAVYGVMRMVAELQLPINVIGVLAGCENMPGGRAYRPGDVLTTMSGQTVEVLNTDAEGRLVLCDVLTYVERFEPEAVIDVATLTGACVIALGHHITGLMSNHNPLAHELIGASEQAGDRAWRLPLGDEFQEQLESNFADMANIGGRPGGAITAGCFLSRFTRKYNWAHLDIAGTAWRSGKAKGATGRPVALLSQFLLNRAGFNGEE</sequence>
<gene>
    <name evidence="1" type="primary">pepA</name>
    <name type="ordered locus">SPA4278</name>
</gene>
<organism>
    <name type="scientific">Salmonella paratyphi A (strain ATCC 9150 / SARB42)</name>
    <dbReference type="NCBI Taxonomy" id="295319"/>
    <lineage>
        <taxon>Bacteria</taxon>
        <taxon>Pseudomonadati</taxon>
        <taxon>Pseudomonadota</taxon>
        <taxon>Gammaproteobacteria</taxon>
        <taxon>Enterobacterales</taxon>
        <taxon>Enterobacteriaceae</taxon>
        <taxon>Salmonella</taxon>
    </lineage>
</organism>